<name>RPIA_SHEB9</name>
<evidence type="ECO:0000255" key="1">
    <source>
        <dbReference type="HAMAP-Rule" id="MF_00170"/>
    </source>
</evidence>
<comment type="function">
    <text evidence="1">Catalyzes the reversible conversion of ribose-5-phosphate to ribulose 5-phosphate.</text>
</comment>
<comment type="catalytic activity">
    <reaction evidence="1">
        <text>aldehydo-D-ribose 5-phosphate = D-ribulose 5-phosphate</text>
        <dbReference type="Rhea" id="RHEA:14657"/>
        <dbReference type="ChEBI" id="CHEBI:58121"/>
        <dbReference type="ChEBI" id="CHEBI:58273"/>
        <dbReference type="EC" id="5.3.1.6"/>
    </reaction>
</comment>
<comment type="pathway">
    <text evidence="1">Carbohydrate degradation; pentose phosphate pathway; D-ribose 5-phosphate from D-ribulose 5-phosphate (non-oxidative stage): step 1/1.</text>
</comment>
<comment type="subunit">
    <text evidence="1">Homodimer.</text>
</comment>
<comment type="similarity">
    <text evidence="1">Belongs to the ribose 5-phosphate isomerase family.</text>
</comment>
<keyword id="KW-0413">Isomerase</keyword>
<protein>
    <recommendedName>
        <fullName evidence="1">Ribose-5-phosphate isomerase A</fullName>
        <ecNumber evidence="1">5.3.1.6</ecNumber>
    </recommendedName>
    <alternativeName>
        <fullName evidence="1">Phosphoriboisomerase A</fullName>
        <shortName evidence="1">PRI</shortName>
    </alternativeName>
</protein>
<dbReference type="EC" id="5.3.1.6" evidence="1"/>
<dbReference type="EMBL" id="CP000891">
    <property type="protein sequence ID" value="ABX50676.1"/>
    <property type="molecule type" value="Genomic_DNA"/>
</dbReference>
<dbReference type="RefSeq" id="WP_006082772.1">
    <property type="nucleotide sequence ID" value="NC_009997.1"/>
</dbReference>
<dbReference type="SMR" id="A9L0P5"/>
<dbReference type="GeneID" id="11773556"/>
<dbReference type="KEGG" id="sbn:Sbal195_3514"/>
<dbReference type="HOGENOM" id="CLU_056590_1_1_6"/>
<dbReference type="UniPathway" id="UPA00115">
    <property type="reaction ID" value="UER00412"/>
</dbReference>
<dbReference type="Proteomes" id="UP000000770">
    <property type="component" value="Chromosome"/>
</dbReference>
<dbReference type="GO" id="GO:0005829">
    <property type="term" value="C:cytosol"/>
    <property type="evidence" value="ECO:0007669"/>
    <property type="project" value="TreeGrafter"/>
</dbReference>
<dbReference type="GO" id="GO:0004751">
    <property type="term" value="F:ribose-5-phosphate isomerase activity"/>
    <property type="evidence" value="ECO:0007669"/>
    <property type="project" value="UniProtKB-UniRule"/>
</dbReference>
<dbReference type="GO" id="GO:0006014">
    <property type="term" value="P:D-ribose metabolic process"/>
    <property type="evidence" value="ECO:0007669"/>
    <property type="project" value="TreeGrafter"/>
</dbReference>
<dbReference type="GO" id="GO:0009052">
    <property type="term" value="P:pentose-phosphate shunt, non-oxidative branch"/>
    <property type="evidence" value="ECO:0007669"/>
    <property type="project" value="UniProtKB-UniRule"/>
</dbReference>
<dbReference type="CDD" id="cd01398">
    <property type="entry name" value="RPI_A"/>
    <property type="match status" value="1"/>
</dbReference>
<dbReference type="FunFam" id="3.30.70.260:FF:000004">
    <property type="entry name" value="Ribose-5-phosphate isomerase A"/>
    <property type="match status" value="1"/>
</dbReference>
<dbReference type="FunFam" id="3.40.50.1360:FF:000001">
    <property type="entry name" value="Ribose-5-phosphate isomerase A"/>
    <property type="match status" value="1"/>
</dbReference>
<dbReference type="Gene3D" id="3.30.70.260">
    <property type="match status" value="1"/>
</dbReference>
<dbReference type="Gene3D" id="3.40.50.1360">
    <property type="match status" value="1"/>
</dbReference>
<dbReference type="HAMAP" id="MF_00170">
    <property type="entry name" value="Rib_5P_isom_A"/>
    <property type="match status" value="1"/>
</dbReference>
<dbReference type="InterPro" id="IPR037171">
    <property type="entry name" value="NagB/RpiA_transferase-like"/>
</dbReference>
<dbReference type="InterPro" id="IPR020672">
    <property type="entry name" value="Ribose5P_isomerase_typA_subgr"/>
</dbReference>
<dbReference type="InterPro" id="IPR004788">
    <property type="entry name" value="Ribose5P_isomerase_type_A"/>
</dbReference>
<dbReference type="NCBIfam" id="NF001924">
    <property type="entry name" value="PRK00702.1"/>
    <property type="match status" value="1"/>
</dbReference>
<dbReference type="NCBIfam" id="TIGR00021">
    <property type="entry name" value="rpiA"/>
    <property type="match status" value="1"/>
</dbReference>
<dbReference type="PANTHER" id="PTHR11934">
    <property type="entry name" value="RIBOSE-5-PHOSPHATE ISOMERASE"/>
    <property type="match status" value="1"/>
</dbReference>
<dbReference type="PANTHER" id="PTHR11934:SF0">
    <property type="entry name" value="RIBOSE-5-PHOSPHATE ISOMERASE"/>
    <property type="match status" value="1"/>
</dbReference>
<dbReference type="Pfam" id="PF06026">
    <property type="entry name" value="Rib_5-P_isom_A"/>
    <property type="match status" value="1"/>
</dbReference>
<dbReference type="SUPFAM" id="SSF75445">
    <property type="entry name" value="D-ribose-5-phosphate isomerase (RpiA), lid domain"/>
    <property type="match status" value="1"/>
</dbReference>
<dbReference type="SUPFAM" id="SSF100950">
    <property type="entry name" value="NagB/RpiA/CoA transferase-like"/>
    <property type="match status" value="1"/>
</dbReference>
<accession>A9L0P5</accession>
<sequence length="220" mass="23590">MTQDEMKKAAGWAALKYVERDSIVGVGTGSTVNHFIDALATMKADIEGAVSSSEASTQKMKALGIPVYDLNSVDRLSVYVDGADEINDRMDMIKGGGAALTREKIVAAVAEKFICIVDNTKQVDILGEFPLPVEVIPMARSYVARQLVKLGGDPVYREGVVTDNGNVILDVYNLKILNPKELESQINEIVGVVTNGLFAKRGADVLLVGTPDGVKTFTAE</sequence>
<gene>
    <name evidence="1" type="primary">rpiA</name>
    <name type="ordered locus">Sbal195_3514</name>
</gene>
<proteinExistence type="inferred from homology"/>
<feature type="chain" id="PRO_1000077077" description="Ribose-5-phosphate isomerase A">
    <location>
        <begin position="1"/>
        <end position="220"/>
    </location>
</feature>
<feature type="active site" description="Proton acceptor" evidence="1">
    <location>
        <position position="103"/>
    </location>
</feature>
<feature type="binding site" evidence="1">
    <location>
        <begin position="28"/>
        <end position="31"/>
    </location>
    <ligand>
        <name>substrate</name>
    </ligand>
</feature>
<feature type="binding site" evidence="1">
    <location>
        <begin position="81"/>
        <end position="84"/>
    </location>
    <ligand>
        <name>substrate</name>
    </ligand>
</feature>
<feature type="binding site" evidence="1">
    <location>
        <begin position="94"/>
        <end position="97"/>
    </location>
    <ligand>
        <name>substrate</name>
    </ligand>
</feature>
<feature type="binding site" evidence="1">
    <location>
        <position position="121"/>
    </location>
    <ligand>
        <name>substrate</name>
    </ligand>
</feature>
<organism>
    <name type="scientific">Shewanella baltica (strain OS195)</name>
    <dbReference type="NCBI Taxonomy" id="399599"/>
    <lineage>
        <taxon>Bacteria</taxon>
        <taxon>Pseudomonadati</taxon>
        <taxon>Pseudomonadota</taxon>
        <taxon>Gammaproteobacteria</taxon>
        <taxon>Alteromonadales</taxon>
        <taxon>Shewanellaceae</taxon>
        <taxon>Shewanella</taxon>
    </lineage>
</organism>
<reference key="1">
    <citation type="submission" date="2007-11" db="EMBL/GenBank/DDBJ databases">
        <title>Complete sequence of chromosome of Shewanella baltica OS195.</title>
        <authorList>
            <consortium name="US DOE Joint Genome Institute"/>
            <person name="Copeland A."/>
            <person name="Lucas S."/>
            <person name="Lapidus A."/>
            <person name="Barry K."/>
            <person name="Glavina del Rio T."/>
            <person name="Dalin E."/>
            <person name="Tice H."/>
            <person name="Pitluck S."/>
            <person name="Chain P."/>
            <person name="Malfatti S."/>
            <person name="Shin M."/>
            <person name="Vergez L."/>
            <person name="Schmutz J."/>
            <person name="Larimer F."/>
            <person name="Land M."/>
            <person name="Hauser L."/>
            <person name="Kyrpides N."/>
            <person name="Kim E."/>
            <person name="Brettar I."/>
            <person name="Rodrigues J."/>
            <person name="Konstantinidis K."/>
            <person name="Klappenbach J."/>
            <person name="Hofle M."/>
            <person name="Tiedje J."/>
            <person name="Richardson P."/>
        </authorList>
    </citation>
    <scope>NUCLEOTIDE SEQUENCE [LARGE SCALE GENOMIC DNA]</scope>
    <source>
        <strain>OS195</strain>
    </source>
</reference>